<gene>
    <name evidence="1" type="primary">pyrG</name>
    <name type="ordered locus">BceJ2315_21440</name>
    <name type="ORF">BCAL2181</name>
</gene>
<evidence type="ECO:0000255" key="1">
    <source>
        <dbReference type="HAMAP-Rule" id="MF_01227"/>
    </source>
</evidence>
<reference key="1">
    <citation type="journal article" date="2009" name="J. Bacteriol.">
        <title>The genome of Burkholderia cenocepacia J2315, an epidemic pathogen of cystic fibrosis patients.</title>
        <authorList>
            <person name="Holden M.T."/>
            <person name="Seth-Smith H.M."/>
            <person name="Crossman L.C."/>
            <person name="Sebaihia M."/>
            <person name="Bentley S.D."/>
            <person name="Cerdeno-Tarraga A.M."/>
            <person name="Thomson N.R."/>
            <person name="Bason N."/>
            <person name="Quail M.A."/>
            <person name="Sharp S."/>
            <person name="Cherevach I."/>
            <person name="Churcher C."/>
            <person name="Goodhead I."/>
            <person name="Hauser H."/>
            <person name="Holroyd N."/>
            <person name="Mungall K."/>
            <person name="Scott P."/>
            <person name="Walker D."/>
            <person name="White B."/>
            <person name="Rose H."/>
            <person name="Iversen P."/>
            <person name="Mil-Homens D."/>
            <person name="Rocha E.P."/>
            <person name="Fialho A.M."/>
            <person name="Baldwin A."/>
            <person name="Dowson C."/>
            <person name="Barrell B.G."/>
            <person name="Govan J.R."/>
            <person name="Vandamme P."/>
            <person name="Hart C.A."/>
            <person name="Mahenthiralingam E."/>
            <person name="Parkhill J."/>
        </authorList>
    </citation>
    <scope>NUCLEOTIDE SEQUENCE [LARGE SCALE GENOMIC DNA]</scope>
    <source>
        <strain>ATCC BAA-245 / DSM 16553 / LMG 16656 / NCTC 13227 / J2315 / CF5610</strain>
    </source>
</reference>
<protein>
    <recommendedName>
        <fullName evidence="1">CTP synthase</fullName>
        <ecNumber evidence="1">6.3.4.2</ecNumber>
    </recommendedName>
    <alternativeName>
        <fullName evidence="1">Cytidine 5'-triphosphate synthase</fullName>
    </alternativeName>
    <alternativeName>
        <fullName evidence="1">Cytidine triphosphate synthetase</fullName>
        <shortName evidence="1">CTP synthetase</shortName>
        <shortName evidence="1">CTPS</shortName>
    </alternativeName>
    <alternativeName>
        <fullName evidence="1">UTP--ammonia ligase</fullName>
    </alternativeName>
</protein>
<sequence>MTKYVFVTGGVVSSLGKGIAAASLAAILESRGLKVTLLKLDPYINVDPGTMSPFQHGEVFVTEDGAETDLDLGHYERFISTKMRKANNFTTGQIYESVIRKERRGDYLGKTVQVIPHITNEIQAFIERGAASATCGEPDVAIVEIGGTVGDIESLPFLEAARQMSLRLGRNSACFVHLTLVPYVATAGELKTKPTQHSVQKLREIGILPHVLLCRADRRIPDDESKKISMFSNVPEDAVISVWDADSIYKIPQMLHDQGLDRIICEELKLSPKDADLSMWSALVEKLENPKQEVTIGMVGKYVDLTESYKSLIEALRHASIHTSTKVNIEYIDSEELETNGVDSLKHLDAVLVPGGFGRRGTEGKIAAVRYARESKVPYLGICLGMQLAVIEFARDVVGLKQANSTEFDPDTPERVVALITEWYDREGKVETRTEESDLGGTMRLGSQRCPIKPGTMAEEIYGKDVNERHRHRYEVNNRFVPQLEAGGLIISARTPSEDLPEMMELPRSMHPWFVGVQFHPEFTSTPRDGHPLFKSFVEAALANKQARGVQA</sequence>
<comment type="function">
    <text evidence="1">Catalyzes the ATP-dependent amination of UTP to CTP with either L-glutamine or ammonia as the source of nitrogen. Regulates intracellular CTP levels through interactions with the four ribonucleotide triphosphates.</text>
</comment>
<comment type="catalytic activity">
    <reaction evidence="1">
        <text>UTP + L-glutamine + ATP + H2O = CTP + L-glutamate + ADP + phosphate + 2 H(+)</text>
        <dbReference type="Rhea" id="RHEA:26426"/>
        <dbReference type="ChEBI" id="CHEBI:15377"/>
        <dbReference type="ChEBI" id="CHEBI:15378"/>
        <dbReference type="ChEBI" id="CHEBI:29985"/>
        <dbReference type="ChEBI" id="CHEBI:30616"/>
        <dbReference type="ChEBI" id="CHEBI:37563"/>
        <dbReference type="ChEBI" id="CHEBI:43474"/>
        <dbReference type="ChEBI" id="CHEBI:46398"/>
        <dbReference type="ChEBI" id="CHEBI:58359"/>
        <dbReference type="ChEBI" id="CHEBI:456216"/>
        <dbReference type="EC" id="6.3.4.2"/>
    </reaction>
</comment>
<comment type="catalytic activity">
    <reaction evidence="1">
        <text>L-glutamine + H2O = L-glutamate + NH4(+)</text>
        <dbReference type="Rhea" id="RHEA:15889"/>
        <dbReference type="ChEBI" id="CHEBI:15377"/>
        <dbReference type="ChEBI" id="CHEBI:28938"/>
        <dbReference type="ChEBI" id="CHEBI:29985"/>
        <dbReference type="ChEBI" id="CHEBI:58359"/>
    </reaction>
</comment>
<comment type="catalytic activity">
    <reaction evidence="1">
        <text>UTP + NH4(+) + ATP = CTP + ADP + phosphate + 2 H(+)</text>
        <dbReference type="Rhea" id="RHEA:16597"/>
        <dbReference type="ChEBI" id="CHEBI:15378"/>
        <dbReference type="ChEBI" id="CHEBI:28938"/>
        <dbReference type="ChEBI" id="CHEBI:30616"/>
        <dbReference type="ChEBI" id="CHEBI:37563"/>
        <dbReference type="ChEBI" id="CHEBI:43474"/>
        <dbReference type="ChEBI" id="CHEBI:46398"/>
        <dbReference type="ChEBI" id="CHEBI:456216"/>
    </reaction>
</comment>
<comment type="activity regulation">
    <text evidence="1">Allosterically activated by GTP, when glutamine is the substrate; GTP has no effect on the reaction when ammonia is the substrate. The allosteric effector GTP functions by stabilizing the protein conformation that binds the tetrahedral intermediate(s) formed during glutamine hydrolysis. Inhibited by the product CTP, via allosteric rather than competitive inhibition.</text>
</comment>
<comment type="pathway">
    <text evidence="1">Pyrimidine metabolism; CTP biosynthesis via de novo pathway; CTP from UDP: step 2/2.</text>
</comment>
<comment type="subunit">
    <text evidence="1">Homotetramer.</text>
</comment>
<comment type="miscellaneous">
    <text evidence="1">CTPSs have evolved a hybrid strategy for distinguishing between UTP and CTP. The overlapping regions of the product feedback inhibitory and substrate sites recognize a common feature in both compounds, the triphosphate moiety. To differentiate isosteric substrate and product pyrimidine rings, an additional pocket far from the expected kinase/ligase catalytic site, specifically recognizes the cytosine and ribose portions of the product inhibitor.</text>
</comment>
<comment type="similarity">
    <text evidence="1">Belongs to the CTP synthase family.</text>
</comment>
<feature type="chain" id="PRO_1000139399" description="CTP synthase">
    <location>
        <begin position="1"/>
        <end position="552"/>
    </location>
</feature>
<feature type="domain" description="Glutamine amidotransferase type-1" evidence="1">
    <location>
        <begin position="295"/>
        <end position="547"/>
    </location>
</feature>
<feature type="region of interest" description="Amidoligase domain" evidence="1">
    <location>
        <begin position="1"/>
        <end position="270"/>
    </location>
</feature>
<feature type="active site" description="Nucleophile; for glutamine hydrolysis" evidence="1">
    <location>
        <position position="383"/>
    </location>
</feature>
<feature type="active site" evidence="1">
    <location>
        <position position="520"/>
    </location>
</feature>
<feature type="active site" evidence="1">
    <location>
        <position position="522"/>
    </location>
</feature>
<feature type="binding site" evidence="1">
    <location>
        <position position="13"/>
    </location>
    <ligand>
        <name>CTP</name>
        <dbReference type="ChEBI" id="CHEBI:37563"/>
        <note>allosteric inhibitor</note>
    </ligand>
</feature>
<feature type="binding site" evidence="1">
    <location>
        <position position="13"/>
    </location>
    <ligand>
        <name>UTP</name>
        <dbReference type="ChEBI" id="CHEBI:46398"/>
    </ligand>
</feature>
<feature type="binding site" evidence="1">
    <location>
        <begin position="14"/>
        <end position="19"/>
    </location>
    <ligand>
        <name>ATP</name>
        <dbReference type="ChEBI" id="CHEBI:30616"/>
    </ligand>
</feature>
<feature type="binding site" evidence="1">
    <location>
        <position position="71"/>
    </location>
    <ligand>
        <name>ATP</name>
        <dbReference type="ChEBI" id="CHEBI:30616"/>
    </ligand>
</feature>
<feature type="binding site" evidence="1">
    <location>
        <position position="71"/>
    </location>
    <ligand>
        <name>Mg(2+)</name>
        <dbReference type="ChEBI" id="CHEBI:18420"/>
    </ligand>
</feature>
<feature type="binding site" evidence="1">
    <location>
        <position position="144"/>
    </location>
    <ligand>
        <name>Mg(2+)</name>
        <dbReference type="ChEBI" id="CHEBI:18420"/>
    </ligand>
</feature>
<feature type="binding site" evidence="1">
    <location>
        <begin position="151"/>
        <end position="153"/>
    </location>
    <ligand>
        <name>CTP</name>
        <dbReference type="ChEBI" id="CHEBI:37563"/>
        <note>allosteric inhibitor</note>
    </ligand>
</feature>
<feature type="binding site" evidence="1">
    <location>
        <begin position="191"/>
        <end position="196"/>
    </location>
    <ligand>
        <name>CTP</name>
        <dbReference type="ChEBI" id="CHEBI:37563"/>
        <note>allosteric inhibitor</note>
    </ligand>
</feature>
<feature type="binding site" evidence="1">
    <location>
        <begin position="191"/>
        <end position="196"/>
    </location>
    <ligand>
        <name>UTP</name>
        <dbReference type="ChEBI" id="CHEBI:46398"/>
    </ligand>
</feature>
<feature type="binding site" evidence="1">
    <location>
        <position position="227"/>
    </location>
    <ligand>
        <name>CTP</name>
        <dbReference type="ChEBI" id="CHEBI:37563"/>
        <note>allosteric inhibitor</note>
    </ligand>
</feature>
<feature type="binding site" evidence="1">
    <location>
        <position position="227"/>
    </location>
    <ligand>
        <name>UTP</name>
        <dbReference type="ChEBI" id="CHEBI:46398"/>
    </ligand>
</feature>
<feature type="binding site" evidence="1">
    <location>
        <position position="356"/>
    </location>
    <ligand>
        <name>L-glutamine</name>
        <dbReference type="ChEBI" id="CHEBI:58359"/>
    </ligand>
</feature>
<feature type="binding site" evidence="1">
    <location>
        <begin position="384"/>
        <end position="387"/>
    </location>
    <ligand>
        <name>L-glutamine</name>
        <dbReference type="ChEBI" id="CHEBI:58359"/>
    </ligand>
</feature>
<feature type="binding site" evidence="1">
    <location>
        <position position="407"/>
    </location>
    <ligand>
        <name>L-glutamine</name>
        <dbReference type="ChEBI" id="CHEBI:58359"/>
    </ligand>
</feature>
<feature type="binding site" evidence="1">
    <location>
        <position position="473"/>
    </location>
    <ligand>
        <name>L-glutamine</name>
        <dbReference type="ChEBI" id="CHEBI:58359"/>
    </ligand>
</feature>
<keyword id="KW-0067">ATP-binding</keyword>
<keyword id="KW-0315">Glutamine amidotransferase</keyword>
<keyword id="KW-0436">Ligase</keyword>
<keyword id="KW-0460">Magnesium</keyword>
<keyword id="KW-0479">Metal-binding</keyword>
<keyword id="KW-0547">Nucleotide-binding</keyword>
<keyword id="KW-0665">Pyrimidine biosynthesis</keyword>
<dbReference type="EC" id="6.3.4.2" evidence="1"/>
<dbReference type="EMBL" id="AM747720">
    <property type="protein sequence ID" value="CAR52482.1"/>
    <property type="molecule type" value="Genomic_DNA"/>
</dbReference>
<dbReference type="RefSeq" id="WP_006478404.1">
    <property type="nucleotide sequence ID" value="NC_011000.1"/>
</dbReference>
<dbReference type="SMR" id="B4EDA3"/>
<dbReference type="MEROPS" id="C26.964"/>
<dbReference type="KEGG" id="bcj:BCAL2181"/>
<dbReference type="eggNOG" id="COG0504">
    <property type="taxonomic scope" value="Bacteria"/>
</dbReference>
<dbReference type="HOGENOM" id="CLU_011675_5_0_4"/>
<dbReference type="BioCyc" id="BCEN216591:G1G1V-2396-MONOMER"/>
<dbReference type="UniPathway" id="UPA00159">
    <property type="reaction ID" value="UER00277"/>
</dbReference>
<dbReference type="Proteomes" id="UP000001035">
    <property type="component" value="Chromosome 1"/>
</dbReference>
<dbReference type="GO" id="GO:0005829">
    <property type="term" value="C:cytosol"/>
    <property type="evidence" value="ECO:0007669"/>
    <property type="project" value="TreeGrafter"/>
</dbReference>
<dbReference type="GO" id="GO:0005524">
    <property type="term" value="F:ATP binding"/>
    <property type="evidence" value="ECO:0007669"/>
    <property type="project" value="UniProtKB-KW"/>
</dbReference>
<dbReference type="GO" id="GO:0003883">
    <property type="term" value="F:CTP synthase activity"/>
    <property type="evidence" value="ECO:0007669"/>
    <property type="project" value="UniProtKB-UniRule"/>
</dbReference>
<dbReference type="GO" id="GO:0004359">
    <property type="term" value="F:glutaminase activity"/>
    <property type="evidence" value="ECO:0007669"/>
    <property type="project" value="RHEA"/>
</dbReference>
<dbReference type="GO" id="GO:0042802">
    <property type="term" value="F:identical protein binding"/>
    <property type="evidence" value="ECO:0007669"/>
    <property type="project" value="TreeGrafter"/>
</dbReference>
<dbReference type="GO" id="GO:0046872">
    <property type="term" value="F:metal ion binding"/>
    <property type="evidence" value="ECO:0007669"/>
    <property type="project" value="UniProtKB-KW"/>
</dbReference>
<dbReference type="GO" id="GO:0044210">
    <property type="term" value="P:'de novo' CTP biosynthetic process"/>
    <property type="evidence" value="ECO:0007669"/>
    <property type="project" value="UniProtKB-UniRule"/>
</dbReference>
<dbReference type="GO" id="GO:0019856">
    <property type="term" value="P:pyrimidine nucleobase biosynthetic process"/>
    <property type="evidence" value="ECO:0007669"/>
    <property type="project" value="TreeGrafter"/>
</dbReference>
<dbReference type="CDD" id="cd03113">
    <property type="entry name" value="CTPS_N"/>
    <property type="match status" value="1"/>
</dbReference>
<dbReference type="CDD" id="cd01746">
    <property type="entry name" value="GATase1_CTP_Synthase"/>
    <property type="match status" value="1"/>
</dbReference>
<dbReference type="FunFam" id="3.40.50.300:FF:000009">
    <property type="entry name" value="CTP synthase"/>
    <property type="match status" value="1"/>
</dbReference>
<dbReference type="FunFam" id="3.40.50.880:FF:000002">
    <property type="entry name" value="CTP synthase"/>
    <property type="match status" value="1"/>
</dbReference>
<dbReference type="Gene3D" id="3.40.50.880">
    <property type="match status" value="1"/>
</dbReference>
<dbReference type="Gene3D" id="3.40.50.300">
    <property type="entry name" value="P-loop containing nucleotide triphosphate hydrolases"/>
    <property type="match status" value="1"/>
</dbReference>
<dbReference type="HAMAP" id="MF_01227">
    <property type="entry name" value="PyrG"/>
    <property type="match status" value="1"/>
</dbReference>
<dbReference type="InterPro" id="IPR029062">
    <property type="entry name" value="Class_I_gatase-like"/>
</dbReference>
<dbReference type="InterPro" id="IPR004468">
    <property type="entry name" value="CTP_synthase"/>
</dbReference>
<dbReference type="InterPro" id="IPR017456">
    <property type="entry name" value="CTP_synthase_N"/>
</dbReference>
<dbReference type="InterPro" id="IPR017926">
    <property type="entry name" value="GATASE"/>
</dbReference>
<dbReference type="InterPro" id="IPR033828">
    <property type="entry name" value="GATase1_CTP_Synthase"/>
</dbReference>
<dbReference type="InterPro" id="IPR027417">
    <property type="entry name" value="P-loop_NTPase"/>
</dbReference>
<dbReference type="NCBIfam" id="NF003792">
    <property type="entry name" value="PRK05380.1"/>
    <property type="match status" value="1"/>
</dbReference>
<dbReference type="NCBIfam" id="TIGR00337">
    <property type="entry name" value="PyrG"/>
    <property type="match status" value="1"/>
</dbReference>
<dbReference type="PANTHER" id="PTHR11550">
    <property type="entry name" value="CTP SYNTHASE"/>
    <property type="match status" value="1"/>
</dbReference>
<dbReference type="PANTHER" id="PTHR11550:SF0">
    <property type="entry name" value="CTP SYNTHASE-RELATED"/>
    <property type="match status" value="1"/>
</dbReference>
<dbReference type="Pfam" id="PF06418">
    <property type="entry name" value="CTP_synth_N"/>
    <property type="match status" value="1"/>
</dbReference>
<dbReference type="Pfam" id="PF00117">
    <property type="entry name" value="GATase"/>
    <property type="match status" value="1"/>
</dbReference>
<dbReference type="SUPFAM" id="SSF52317">
    <property type="entry name" value="Class I glutamine amidotransferase-like"/>
    <property type="match status" value="1"/>
</dbReference>
<dbReference type="SUPFAM" id="SSF52540">
    <property type="entry name" value="P-loop containing nucleoside triphosphate hydrolases"/>
    <property type="match status" value="1"/>
</dbReference>
<dbReference type="PROSITE" id="PS51273">
    <property type="entry name" value="GATASE_TYPE_1"/>
    <property type="match status" value="1"/>
</dbReference>
<accession>B4EDA3</accession>
<proteinExistence type="inferred from homology"/>
<name>PYRG_BURCJ</name>
<organism>
    <name type="scientific">Burkholderia cenocepacia (strain ATCC BAA-245 / DSM 16553 / LMG 16656 / NCTC 13227 / J2315 / CF5610)</name>
    <name type="common">Burkholderia cepacia (strain J2315)</name>
    <dbReference type="NCBI Taxonomy" id="216591"/>
    <lineage>
        <taxon>Bacteria</taxon>
        <taxon>Pseudomonadati</taxon>
        <taxon>Pseudomonadota</taxon>
        <taxon>Betaproteobacteria</taxon>
        <taxon>Burkholderiales</taxon>
        <taxon>Burkholderiaceae</taxon>
        <taxon>Burkholderia</taxon>
        <taxon>Burkholderia cepacia complex</taxon>
    </lineage>
</organism>